<organism>
    <name type="scientific">Arabidopsis thaliana</name>
    <name type="common">Mouse-ear cress</name>
    <dbReference type="NCBI Taxonomy" id="3702"/>
    <lineage>
        <taxon>Eukaryota</taxon>
        <taxon>Viridiplantae</taxon>
        <taxon>Streptophyta</taxon>
        <taxon>Embryophyta</taxon>
        <taxon>Tracheophyta</taxon>
        <taxon>Spermatophyta</taxon>
        <taxon>Magnoliopsida</taxon>
        <taxon>eudicotyledons</taxon>
        <taxon>Gunneridae</taxon>
        <taxon>Pentapetalae</taxon>
        <taxon>rosids</taxon>
        <taxon>malvids</taxon>
        <taxon>Brassicales</taxon>
        <taxon>Brassicaceae</taxon>
        <taxon>Camelineae</taxon>
        <taxon>Arabidopsis</taxon>
    </lineage>
</organism>
<feature type="chain" id="PRO_0000453109" description="Protein IQ-DOMAIN 2">
    <location>
        <begin position="1"/>
        <end position="461"/>
    </location>
</feature>
<feature type="domain" description="IQ" evidence="2">
    <location>
        <begin position="114"/>
        <end position="142"/>
    </location>
</feature>
<feature type="region of interest" description="Disordered" evidence="4">
    <location>
        <begin position="1"/>
        <end position="55"/>
    </location>
</feature>
<feature type="region of interest" description="Calmodulin-binding" evidence="6">
    <location>
        <begin position="141"/>
        <end position="158"/>
    </location>
</feature>
<feature type="region of interest" description="Disordered" evidence="4">
    <location>
        <begin position="278"/>
        <end position="461"/>
    </location>
</feature>
<feature type="short sequence motif" description="Nuclear localization signal" evidence="3">
    <location>
        <begin position="425"/>
        <end position="432"/>
    </location>
</feature>
<feature type="compositionally biased region" description="Polar residues" evidence="4">
    <location>
        <begin position="310"/>
        <end position="345"/>
    </location>
</feature>
<name>IQD2_ARATH</name>
<sequence length="461" mass="50463">MGKKAKWFSSVKKAFSPDSKKSKQKLAEGQNGVISNPPVVDNVRQSSSSPPPALAPREVRVAEVIVERNRDLSPPSTADAVNVTATDVPVVPSSSAPGVVRRATPTRFAGKSNEEAAAILIQTIFRGYLARRALRAMRGLVRLKLLMEGSVVKRQAANTLKCMQTLSRVQSQIRARRIRMSEENQARQKQLLQKHAKELAGLKNGDNWNDSIQSKEKVEANLLSKYEATMRRERALAYSYSHQQNWKNNSKSGNPMFMDPSNPTWGWSWLERWMAGRPLESSEKEQSNSNNDNAASVKGSINRNEAAKSLTRNGSTQPNTPSSARGTPRNKNSFFSPPTPSRLNQSSRKSNDDDSKSTISVLSERNRRHSIAGSSVRDDESLAGSPALPSYMVPTKSARARLKPQSPLGGTTQENEGFTDKASAKKRLSYPTSPALPKPRRFSAPPKVESGGVTVTNGAGS</sequence>
<gene>
    <name evidence="6" type="primary">IQD2</name>
    <name evidence="8" type="ordered locus">At5g03040</name>
    <name evidence="9" type="ORF">F15A17.70</name>
</gene>
<comment type="function">
    <text evidence="1">May be involved in cooperative interactions with calmodulins or calmodulin-like proteins (By similarity). Recruits calmodulin proteins to microtubules, thus being a potential scaffold in cellular signaling and trafficking (By similarity). May associate with nucleic acids and regulate gene expression at the transcriptional or post-transcriptional level (By similarity).</text>
</comment>
<comment type="subunit">
    <text evidence="1">Binds to multiple calmodulin (CaM) in the presence of Ca(2+) and CaM-like proteins.</text>
</comment>
<comment type="subcellular location">
    <subcellularLocation>
        <location evidence="3">Nucleus</location>
    </subcellularLocation>
    <subcellularLocation>
        <location evidence="5">Cytoplasm</location>
        <location evidence="5">Cytoskeleton</location>
    </subcellularLocation>
</comment>
<comment type="similarity">
    <text evidence="7">Belongs to the IQD family.</text>
</comment>
<comment type="sequence caution" evidence="7">
    <conflict type="erroneous gene model prediction">
        <sequence resource="EMBL-CDS" id="CAB86071"/>
    </conflict>
</comment>
<evidence type="ECO:0000250" key="1">
    <source>
        <dbReference type="UniProtKB" id="Q9SF32"/>
    </source>
</evidence>
<evidence type="ECO:0000255" key="2">
    <source>
        <dbReference type="PROSITE-ProRule" id="PRU00116"/>
    </source>
</evidence>
<evidence type="ECO:0000255" key="3">
    <source>
        <dbReference type="PROSITE-ProRule" id="PRU00768"/>
    </source>
</evidence>
<evidence type="ECO:0000256" key="4">
    <source>
        <dbReference type="SAM" id="MobiDB-lite"/>
    </source>
</evidence>
<evidence type="ECO:0000269" key="5">
    <source>
    </source>
</evidence>
<evidence type="ECO:0000303" key="6">
    <source>
    </source>
</evidence>
<evidence type="ECO:0000305" key="7"/>
<evidence type="ECO:0000312" key="8">
    <source>
        <dbReference type="EMBL" id="AED90548.1"/>
    </source>
</evidence>
<evidence type="ECO:0000312" key="9">
    <source>
        <dbReference type="EMBL" id="CAB86071.1"/>
    </source>
</evidence>
<dbReference type="EMBL" id="AL163002">
    <property type="protein sequence ID" value="CAB86071.1"/>
    <property type="status" value="ALT_SEQ"/>
    <property type="molecule type" value="Genomic_DNA"/>
</dbReference>
<dbReference type="EMBL" id="CP002688">
    <property type="protein sequence ID" value="AED90548.1"/>
    <property type="molecule type" value="Genomic_DNA"/>
</dbReference>
<dbReference type="EMBL" id="CP002688">
    <property type="protein sequence ID" value="AED90549.1"/>
    <property type="molecule type" value="Genomic_DNA"/>
</dbReference>
<dbReference type="EMBL" id="CP002688">
    <property type="protein sequence ID" value="AED90550.1"/>
    <property type="molecule type" value="Genomic_DNA"/>
</dbReference>
<dbReference type="EMBL" id="AY057527">
    <property type="protein sequence ID" value="AAL09767.1"/>
    <property type="molecule type" value="mRNA"/>
</dbReference>
<dbReference type="EMBL" id="AY143972">
    <property type="protein sequence ID" value="AAN28911.1"/>
    <property type="molecule type" value="mRNA"/>
</dbReference>
<dbReference type="PIR" id="T48325">
    <property type="entry name" value="T48325"/>
</dbReference>
<dbReference type="RefSeq" id="NP_001154693.1">
    <property type="nucleotide sequence ID" value="NM_001161221.1"/>
</dbReference>
<dbReference type="RefSeq" id="NP_001190211.1">
    <property type="nucleotide sequence ID" value="NM_001203282.1"/>
</dbReference>
<dbReference type="RefSeq" id="NP_568110.2">
    <property type="nucleotide sequence ID" value="NM_120382.4"/>
</dbReference>
<dbReference type="SMR" id="Q93ZH7"/>
<dbReference type="FunCoup" id="Q93ZH7">
    <property type="interactions" value="1200"/>
</dbReference>
<dbReference type="IntAct" id="Q93ZH7">
    <property type="interactions" value="3"/>
</dbReference>
<dbReference type="STRING" id="3702.Q93ZH7"/>
<dbReference type="GlyGen" id="Q93ZH7">
    <property type="glycosylation" value="1 site"/>
</dbReference>
<dbReference type="iPTMnet" id="Q93ZH7"/>
<dbReference type="PaxDb" id="3702-AT5G03040.1"/>
<dbReference type="ProMEX" id="Q93ZH7"/>
<dbReference type="ProteomicsDB" id="175239"/>
<dbReference type="EnsemblPlants" id="AT5G03040.1">
    <property type="protein sequence ID" value="AT5G03040.1"/>
    <property type="gene ID" value="AT5G03040"/>
</dbReference>
<dbReference type="EnsemblPlants" id="AT5G03040.2">
    <property type="protein sequence ID" value="AT5G03040.2"/>
    <property type="gene ID" value="AT5G03040"/>
</dbReference>
<dbReference type="EnsemblPlants" id="AT5G03040.3">
    <property type="protein sequence ID" value="AT5G03040.3"/>
    <property type="gene ID" value="AT5G03040"/>
</dbReference>
<dbReference type="GeneID" id="831696"/>
<dbReference type="Gramene" id="AT5G03040.1">
    <property type="protein sequence ID" value="AT5G03040.1"/>
    <property type="gene ID" value="AT5G03040"/>
</dbReference>
<dbReference type="Gramene" id="AT5G03040.2">
    <property type="protein sequence ID" value="AT5G03040.2"/>
    <property type="gene ID" value="AT5G03040"/>
</dbReference>
<dbReference type="Gramene" id="AT5G03040.3">
    <property type="protein sequence ID" value="AT5G03040.3"/>
    <property type="gene ID" value="AT5G03040"/>
</dbReference>
<dbReference type="KEGG" id="ath:AT5G03040"/>
<dbReference type="Araport" id="AT5G03040"/>
<dbReference type="TAIR" id="AT5G03040">
    <property type="gene designation" value="IQD2"/>
</dbReference>
<dbReference type="eggNOG" id="ENOG502QUAG">
    <property type="taxonomic scope" value="Eukaryota"/>
</dbReference>
<dbReference type="HOGENOM" id="CLU_024547_3_1_1"/>
<dbReference type="InParanoid" id="Q93ZH7"/>
<dbReference type="OMA" id="SWMERRM"/>
<dbReference type="OrthoDB" id="1923765at2759"/>
<dbReference type="PhylomeDB" id="Q93ZH7"/>
<dbReference type="PRO" id="PR:Q93ZH7"/>
<dbReference type="Proteomes" id="UP000006548">
    <property type="component" value="Chromosome 5"/>
</dbReference>
<dbReference type="ExpressionAtlas" id="Q93ZH7">
    <property type="expression patterns" value="baseline and differential"/>
</dbReference>
<dbReference type="GO" id="GO:0005737">
    <property type="term" value="C:cytoplasm"/>
    <property type="evidence" value="ECO:0007669"/>
    <property type="project" value="UniProtKB-KW"/>
</dbReference>
<dbReference type="GO" id="GO:0005856">
    <property type="term" value="C:cytoskeleton"/>
    <property type="evidence" value="ECO:0007669"/>
    <property type="project" value="UniProtKB-SubCell"/>
</dbReference>
<dbReference type="GO" id="GO:0005634">
    <property type="term" value="C:nucleus"/>
    <property type="evidence" value="ECO:0007669"/>
    <property type="project" value="UniProtKB-SubCell"/>
</dbReference>
<dbReference type="GO" id="GO:0005886">
    <property type="term" value="C:plasma membrane"/>
    <property type="evidence" value="ECO:0007005"/>
    <property type="project" value="TAIR"/>
</dbReference>
<dbReference type="GO" id="GO:0005516">
    <property type="term" value="F:calmodulin binding"/>
    <property type="evidence" value="ECO:0007669"/>
    <property type="project" value="UniProtKB-KW"/>
</dbReference>
<dbReference type="CDD" id="cd23767">
    <property type="entry name" value="IQCD"/>
    <property type="match status" value="1"/>
</dbReference>
<dbReference type="InterPro" id="IPR025064">
    <property type="entry name" value="DUF4005"/>
</dbReference>
<dbReference type="InterPro" id="IPR000048">
    <property type="entry name" value="IQ_motif_EF-hand-BS"/>
</dbReference>
<dbReference type="PANTHER" id="PTHR32295">
    <property type="entry name" value="IQ-DOMAIN 5-RELATED"/>
    <property type="match status" value="1"/>
</dbReference>
<dbReference type="PANTHER" id="PTHR32295:SF175">
    <property type="entry name" value="PROTEIN IQ-DOMAIN 2"/>
    <property type="match status" value="1"/>
</dbReference>
<dbReference type="Pfam" id="PF13178">
    <property type="entry name" value="DUF4005"/>
    <property type="match status" value="1"/>
</dbReference>
<dbReference type="Pfam" id="PF00612">
    <property type="entry name" value="IQ"/>
    <property type="match status" value="1"/>
</dbReference>
<dbReference type="SMART" id="SM00015">
    <property type="entry name" value="IQ"/>
    <property type="match status" value="1"/>
</dbReference>
<dbReference type="PROSITE" id="PS50096">
    <property type="entry name" value="IQ"/>
    <property type="match status" value="1"/>
</dbReference>
<accession>Q93ZH7</accession>
<accession>Q9LYY1</accession>
<protein>
    <recommendedName>
        <fullName evidence="6">Protein IQ-DOMAIN 2</fullName>
        <shortName evidence="6">AtIQD2</shortName>
    </recommendedName>
</protein>
<proteinExistence type="evidence at protein level"/>
<reference key="1">
    <citation type="journal article" date="2000" name="Nature">
        <title>Sequence and analysis of chromosome 5 of the plant Arabidopsis thaliana.</title>
        <authorList>
            <person name="Tabata S."/>
            <person name="Kaneko T."/>
            <person name="Nakamura Y."/>
            <person name="Kotani H."/>
            <person name="Kato T."/>
            <person name="Asamizu E."/>
            <person name="Miyajima N."/>
            <person name="Sasamoto S."/>
            <person name="Kimura T."/>
            <person name="Hosouchi T."/>
            <person name="Kawashima K."/>
            <person name="Kohara M."/>
            <person name="Matsumoto M."/>
            <person name="Matsuno A."/>
            <person name="Muraki A."/>
            <person name="Nakayama S."/>
            <person name="Nakazaki N."/>
            <person name="Naruo K."/>
            <person name="Okumura S."/>
            <person name="Shinpo S."/>
            <person name="Takeuchi C."/>
            <person name="Wada T."/>
            <person name="Watanabe A."/>
            <person name="Yamada M."/>
            <person name="Yasuda M."/>
            <person name="Sato S."/>
            <person name="de la Bastide M."/>
            <person name="Huang E."/>
            <person name="Spiegel L."/>
            <person name="Gnoj L."/>
            <person name="O'Shaughnessy A."/>
            <person name="Preston R."/>
            <person name="Habermann K."/>
            <person name="Murray J."/>
            <person name="Johnson D."/>
            <person name="Rohlfing T."/>
            <person name="Nelson J."/>
            <person name="Stoneking T."/>
            <person name="Pepin K."/>
            <person name="Spieth J."/>
            <person name="Sekhon M."/>
            <person name="Armstrong J."/>
            <person name="Becker M."/>
            <person name="Belter E."/>
            <person name="Cordum H."/>
            <person name="Cordes M."/>
            <person name="Courtney L."/>
            <person name="Courtney W."/>
            <person name="Dante M."/>
            <person name="Du H."/>
            <person name="Edwards J."/>
            <person name="Fryman J."/>
            <person name="Haakensen B."/>
            <person name="Lamar E."/>
            <person name="Latreille P."/>
            <person name="Leonard S."/>
            <person name="Meyer R."/>
            <person name="Mulvaney E."/>
            <person name="Ozersky P."/>
            <person name="Riley A."/>
            <person name="Strowmatt C."/>
            <person name="Wagner-McPherson C."/>
            <person name="Wollam A."/>
            <person name="Yoakum M."/>
            <person name="Bell M."/>
            <person name="Dedhia N."/>
            <person name="Parnell L."/>
            <person name="Shah R."/>
            <person name="Rodriguez M."/>
            <person name="Hoon See L."/>
            <person name="Vil D."/>
            <person name="Baker J."/>
            <person name="Kirchoff K."/>
            <person name="Toth K."/>
            <person name="King L."/>
            <person name="Bahret A."/>
            <person name="Miller B."/>
            <person name="Marra M.A."/>
            <person name="Martienssen R."/>
            <person name="McCombie W.R."/>
            <person name="Wilson R.K."/>
            <person name="Murphy G."/>
            <person name="Bancroft I."/>
            <person name="Volckaert G."/>
            <person name="Wambutt R."/>
            <person name="Duesterhoeft A."/>
            <person name="Stiekema W."/>
            <person name="Pohl T."/>
            <person name="Entian K.-D."/>
            <person name="Terryn N."/>
            <person name="Hartley N."/>
            <person name="Bent E."/>
            <person name="Johnson S."/>
            <person name="Langham S.-A."/>
            <person name="McCullagh B."/>
            <person name="Robben J."/>
            <person name="Grymonprez B."/>
            <person name="Zimmermann W."/>
            <person name="Ramsperger U."/>
            <person name="Wedler H."/>
            <person name="Balke K."/>
            <person name="Wedler E."/>
            <person name="Peters S."/>
            <person name="van Staveren M."/>
            <person name="Dirkse W."/>
            <person name="Mooijman P."/>
            <person name="Klein Lankhorst R."/>
            <person name="Weitzenegger T."/>
            <person name="Bothe G."/>
            <person name="Rose M."/>
            <person name="Hauf J."/>
            <person name="Berneiser S."/>
            <person name="Hempel S."/>
            <person name="Feldpausch M."/>
            <person name="Lamberth S."/>
            <person name="Villarroel R."/>
            <person name="Gielen J."/>
            <person name="Ardiles W."/>
            <person name="Bents O."/>
            <person name="Lemcke K."/>
            <person name="Kolesov G."/>
            <person name="Mayer K.F.X."/>
            <person name="Rudd S."/>
            <person name="Schoof H."/>
            <person name="Schueller C."/>
            <person name="Zaccaria P."/>
            <person name="Mewes H.-W."/>
            <person name="Bevan M."/>
            <person name="Fransz P.F."/>
        </authorList>
    </citation>
    <scope>NUCLEOTIDE SEQUENCE [LARGE SCALE GENOMIC DNA]</scope>
    <source>
        <strain>cv. Columbia</strain>
    </source>
</reference>
<reference key="2">
    <citation type="journal article" date="2017" name="Plant J.">
        <title>Araport11: a complete reannotation of the Arabidopsis thaliana reference genome.</title>
        <authorList>
            <person name="Cheng C.Y."/>
            <person name="Krishnakumar V."/>
            <person name="Chan A.P."/>
            <person name="Thibaud-Nissen F."/>
            <person name="Schobel S."/>
            <person name="Town C.D."/>
        </authorList>
    </citation>
    <scope>GENOME REANNOTATION</scope>
    <source>
        <strain>cv. Columbia</strain>
    </source>
</reference>
<reference key="3">
    <citation type="journal article" date="2003" name="Science">
        <title>Empirical analysis of transcriptional activity in the Arabidopsis genome.</title>
        <authorList>
            <person name="Yamada K."/>
            <person name="Lim J."/>
            <person name="Dale J.M."/>
            <person name="Chen H."/>
            <person name="Shinn P."/>
            <person name="Palm C.J."/>
            <person name="Southwick A.M."/>
            <person name="Wu H.C."/>
            <person name="Kim C.J."/>
            <person name="Nguyen M."/>
            <person name="Pham P.K."/>
            <person name="Cheuk R.F."/>
            <person name="Karlin-Newmann G."/>
            <person name="Liu S.X."/>
            <person name="Lam B."/>
            <person name="Sakano H."/>
            <person name="Wu T."/>
            <person name="Yu G."/>
            <person name="Miranda M."/>
            <person name="Quach H.L."/>
            <person name="Tripp M."/>
            <person name="Chang C.H."/>
            <person name="Lee J.M."/>
            <person name="Toriumi M.J."/>
            <person name="Chan M.M."/>
            <person name="Tang C.C."/>
            <person name="Onodera C.S."/>
            <person name="Deng J.M."/>
            <person name="Akiyama K."/>
            <person name="Ansari Y."/>
            <person name="Arakawa T."/>
            <person name="Banh J."/>
            <person name="Banno F."/>
            <person name="Bowser L."/>
            <person name="Brooks S.Y."/>
            <person name="Carninci P."/>
            <person name="Chao Q."/>
            <person name="Choy N."/>
            <person name="Enju A."/>
            <person name="Goldsmith A.D."/>
            <person name="Gurjal M."/>
            <person name="Hansen N.F."/>
            <person name="Hayashizaki Y."/>
            <person name="Johnson-Hopson C."/>
            <person name="Hsuan V.W."/>
            <person name="Iida K."/>
            <person name="Karnes M."/>
            <person name="Khan S."/>
            <person name="Koesema E."/>
            <person name="Ishida J."/>
            <person name="Jiang P.X."/>
            <person name="Jones T."/>
            <person name="Kawai J."/>
            <person name="Kamiya A."/>
            <person name="Meyers C."/>
            <person name="Nakajima M."/>
            <person name="Narusaka M."/>
            <person name="Seki M."/>
            <person name="Sakurai T."/>
            <person name="Satou M."/>
            <person name="Tamse R."/>
            <person name="Vaysberg M."/>
            <person name="Wallender E.K."/>
            <person name="Wong C."/>
            <person name="Yamamura Y."/>
            <person name="Yuan S."/>
            <person name="Shinozaki K."/>
            <person name="Davis R.W."/>
            <person name="Theologis A."/>
            <person name="Ecker J.R."/>
        </authorList>
    </citation>
    <scope>NUCLEOTIDE SEQUENCE [LARGE SCALE MRNA]</scope>
    <source>
        <strain>cv. Columbia</strain>
    </source>
</reference>
<reference key="4">
    <citation type="journal article" date="2005" name="BMC Evol. Biol.">
        <title>Genome-wide comparative analysis of the IQD gene families in Arabidopsis thaliana and Oryza sativa.</title>
        <authorList>
            <person name="Abel S."/>
            <person name="Savchenko T."/>
            <person name="Levy M."/>
        </authorList>
    </citation>
    <scope>INTERACTION WITH CALMODULIN</scope>
    <scope>GENE FAMILY</scope>
    <scope>NOMENCLATURE</scope>
    <source>
        <strain>cv. Columbia</strain>
    </source>
</reference>
<reference key="5">
    <citation type="journal article" date="2005" name="Plant J.">
        <title>Arabidopsis IQD1, a novel calmodulin-binding nuclear protein, stimulates glucosinolate accumulation and plant defense.</title>
        <authorList>
            <person name="Levy M."/>
            <person name="Wang Q."/>
            <person name="Kaspi R."/>
            <person name="Parrella M.P."/>
            <person name="Abel S."/>
        </authorList>
    </citation>
    <scope>GENE FAMILY</scope>
</reference>
<reference key="6">
    <citation type="journal article" date="2009" name="Plant Physiol.">
        <title>Large-scale Arabidopsis phosphoproteome profiling reveals novel chloroplast kinase substrates and phosphorylation networks.</title>
        <authorList>
            <person name="Reiland S."/>
            <person name="Messerli G."/>
            <person name="Baerenfaller K."/>
            <person name="Gerrits B."/>
            <person name="Endler A."/>
            <person name="Grossmann J."/>
            <person name="Gruissem W."/>
            <person name="Baginsky S."/>
        </authorList>
    </citation>
    <scope>IDENTIFICATION BY MASS SPECTROMETRY [LARGE SCALE ANALYSIS]</scope>
</reference>
<reference key="7">
    <citation type="journal article" date="2017" name="Plant Physiol.">
        <title>The IQD family of calmodulin-binding proteins links calcium signaling to microtubules, membrane subdomains, and the nucleus.</title>
        <authorList>
            <person name="Buerstenbinder K."/>
            <person name="Moeller B."/>
            <person name="Ploetner R."/>
            <person name="Stamm G."/>
            <person name="Hause G."/>
            <person name="Mitra D."/>
            <person name="Abel S."/>
        </authorList>
    </citation>
    <scope>SUBCELLULAR LOCATION</scope>
    <source>
        <strain>cv. Columbia</strain>
    </source>
</reference>
<reference key="8">
    <citation type="journal article" date="2017" name="Plant Signal. Behav.">
        <title>Functions of IQD proteins as hubs in cellular calcium and auxin signaling: A toolbox for shape formation and tissue-specification in plants?</title>
        <authorList>
            <person name="Buerstenbinder K."/>
            <person name="Mitra D."/>
            <person name="Quegwer J."/>
        </authorList>
    </citation>
    <scope>REVIEW</scope>
</reference>
<keyword id="KW-0112">Calmodulin-binding</keyword>
<keyword id="KW-0963">Cytoplasm</keyword>
<keyword id="KW-0206">Cytoskeleton</keyword>
<keyword id="KW-0539">Nucleus</keyword>
<keyword id="KW-1185">Reference proteome</keyword>